<protein>
    <recommendedName>
        <fullName>Stress response protein nst1</fullName>
    </recommendedName>
</protein>
<accession>Q4WXQ7</accession>
<dbReference type="EMBL" id="AAHF01000002">
    <property type="protein sequence ID" value="EAL92546.1"/>
    <property type="molecule type" value="Genomic_DNA"/>
</dbReference>
<dbReference type="RefSeq" id="XP_754584.1">
    <property type="nucleotide sequence ID" value="XM_749491.1"/>
</dbReference>
<dbReference type="SMR" id="Q4WXQ7"/>
<dbReference type="STRING" id="330879.Q4WXQ7"/>
<dbReference type="EnsemblFungi" id="EAL92546">
    <property type="protein sequence ID" value="EAL92546"/>
    <property type="gene ID" value="AFUA_3G10350"/>
</dbReference>
<dbReference type="GeneID" id="3511935"/>
<dbReference type="KEGG" id="afm:AFUA_3G10350"/>
<dbReference type="eggNOG" id="ENOG502QSSK">
    <property type="taxonomic scope" value="Eukaryota"/>
</dbReference>
<dbReference type="HOGENOM" id="CLU_002935_0_0_1"/>
<dbReference type="InParanoid" id="Q4WXQ7"/>
<dbReference type="OMA" id="EEDTQYG"/>
<dbReference type="OrthoDB" id="21629at2759"/>
<dbReference type="Proteomes" id="UP000002530">
    <property type="component" value="Chromosome 3"/>
</dbReference>
<dbReference type="GO" id="GO:0005737">
    <property type="term" value="C:cytoplasm"/>
    <property type="evidence" value="ECO:0007669"/>
    <property type="project" value="UniProtKB-SubCell"/>
</dbReference>
<dbReference type="InterPro" id="IPR051195">
    <property type="entry name" value="Fungal_stress_NST1"/>
</dbReference>
<dbReference type="InterPro" id="IPR025279">
    <property type="entry name" value="NST1"/>
</dbReference>
<dbReference type="PANTHER" id="PTHR31780:SF10">
    <property type="entry name" value="LD36051P"/>
    <property type="match status" value="1"/>
</dbReference>
<dbReference type="PANTHER" id="PTHR31780">
    <property type="entry name" value="STRESS RESPONSE PROTEIN NST1-RELATED"/>
    <property type="match status" value="1"/>
</dbReference>
<dbReference type="Pfam" id="PF13945">
    <property type="entry name" value="NST1"/>
    <property type="match status" value="1"/>
</dbReference>
<sequence length="1153" mass="127978">MVPAPHTQHYSSSTMPNSSSTTAHSAPTTNGDVHAPKDHQLSSPSDTVPAPVNRKKQKRRQKQAARLAERQLANGHVSTDDATQNGSSHTNPERHHSDDGGADGPDHEQPANGDVYPKDGQDSTEAHIDSQNPQGPNGTESSQKSTGRKSKKKKGKKGRNGSHAQGDETSTPMSTPSVSMSHPLPPPLSSHLASHNILKPAKNRSIWNTSTQEERENIKTFWLELGEEERRQLVKVEKDAVLKKMKEQQRHSCSCTVCGRKRTAIEEELEVLYDAYYEELEQYANHNQGSFEKGSPMVPPPRLYQPPLRSPGQHTRTQGQFHPSRGRIHELTEDDDLEENYDEEEDDGDEPYSDEELDEEDEETRAARADFFAFGNSLTVKVADDLLKNDGKHFIDMMEQLAERRMQREEDTQYGIAAAHESLHSGHNHGPFDDEDYDDEEDEDYDSQEEEDYEEDEMDAMTEEQRMEEGRRMFQIFAARMFEQRVLTAYREKVAEQRQQKLIEELMEEETRNEQRNAKKAREAQKRKDKKRLQKQAKEEERARREAEKAAEEAAAKAEQEKKLEEQRKKREEQRKKKEAERKAQEEERARKEAEKLRRQREERERQAEAERKQREEKKRREEARRKEKEERELREKKAKEERDRKAQEQQAKKDTAKGGEEAKDQEKRDDQAKRSSQQVPVPIPTNLHHLQGLSPTVAHSPHVPSATPVLPKAPTPAKPRQPSQQDSHSSSPHSQAPSTDPSQASLSPRSMPVSQSSGVASGNSQQGQGLHAMLHQPQPSTPLSPLGRSIPPGFSSVNGIPPNPPGLSGMVARPPVGHDLPSYPSHSGPFISPFRGYPAPTGIPAPPGINGARPMPPGRGFPLEPAQGFAFHGQQIPGAFSTPQGGLPHRHSRQPSGSLERSPLENHAQPMPISRPSPIKRPSSTQQDQQKGDDRTTQRDVDDLSAHLGSSALLDDSDVSLSSNLSQSLPGATVPGTFSGPARASFGGPSLFPDPLSASGWSNNAFGSGGHHRAHTSRPVAIRLLVIQACKQLNTMSPSKGADGYHDVNLVLRHVEQLRPQNEPSISLKEMLDICDTEGNTQNGGGTFSIRKDETGEFVKFEPDNNSAASGHRGSIVPGEIGSPVPSSSLPAFGGIGTPSVLRQYSSPPMGF</sequence>
<name>NST1_ASPFU</name>
<feature type="chain" id="PRO_0000324440" description="Stress response protein nst1">
    <location>
        <begin position="1"/>
        <end position="1153"/>
    </location>
</feature>
<feature type="region of interest" description="Disordered" evidence="3">
    <location>
        <begin position="1"/>
        <end position="212"/>
    </location>
</feature>
<feature type="region of interest" description="Disordered" evidence="3">
    <location>
        <begin position="288"/>
        <end position="364"/>
    </location>
</feature>
<feature type="region of interest" description="Disordered" evidence="3">
    <location>
        <begin position="421"/>
        <end position="467"/>
    </location>
</feature>
<feature type="region of interest" description="Disordered" evidence="3">
    <location>
        <begin position="507"/>
        <end position="941"/>
    </location>
</feature>
<feature type="coiled-coil region" evidence="2">
    <location>
        <begin position="447"/>
        <end position="658"/>
    </location>
</feature>
<feature type="compositionally biased region" description="Low complexity" evidence="3">
    <location>
        <begin position="11"/>
        <end position="30"/>
    </location>
</feature>
<feature type="compositionally biased region" description="Basic residues" evidence="3">
    <location>
        <begin position="53"/>
        <end position="63"/>
    </location>
</feature>
<feature type="compositionally biased region" description="Low complexity" evidence="3">
    <location>
        <begin position="64"/>
        <end position="73"/>
    </location>
</feature>
<feature type="compositionally biased region" description="Polar residues" evidence="3">
    <location>
        <begin position="76"/>
        <end position="90"/>
    </location>
</feature>
<feature type="compositionally biased region" description="Basic and acidic residues" evidence="3">
    <location>
        <begin position="91"/>
        <end position="109"/>
    </location>
</feature>
<feature type="compositionally biased region" description="Basic and acidic residues" evidence="3">
    <location>
        <begin position="116"/>
        <end position="128"/>
    </location>
</feature>
<feature type="compositionally biased region" description="Polar residues" evidence="3">
    <location>
        <begin position="129"/>
        <end position="140"/>
    </location>
</feature>
<feature type="compositionally biased region" description="Basic residues" evidence="3">
    <location>
        <begin position="146"/>
        <end position="160"/>
    </location>
</feature>
<feature type="compositionally biased region" description="Low complexity" evidence="3">
    <location>
        <begin position="169"/>
        <end position="182"/>
    </location>
</feature>
<feature type="compositionally biased region" description="Polar residues" evidence="3">
    <location>
        <begin position="312"/>
        <end position="321"/>
    </location>
</feature>
<feature type="compositionally biased region" description="Acidic residues" evidence="3">
    <location>
        <begin position="332"/>
        <end position="363"/>
    </location>
</feature>
<feature type="compositionally biased region" description="Acidic residues" evidence="3">
    <location>
        <begin position="433"/>
        <end position="462"/>
    </location>
</feature>
<feature type="compositionally biased region" description="Basic and acidic residues" evidence="3">
    <location>
        <begin position="507"/>
        <end position="526"/>
    </location>
</feature>
<feature type="compositionally biased region" description="Basic and acidic residues" evidence="3">
    <location>
        <begin position="536"/>
        <end position="674"/>
    </location>
</feature>
<feature type="compositionally biased region" description="Low complexity" evidence="3">
    <location>
        <begin position="721"/>
        <end position="739"/>
    </location>
</feature>
<feature type="compositionally biased region" description="Polar residues" evidence="3">
    <location>
        <begin position="740"/>
        <end position="769"/>
    </location>
</feature>
<feature type="compositionally biased region" description="Low complexity" evidence="3">
    <location>
        <begin position="913"/>
        <end position="925"/>
    </location>
</feature>
<feature type="compositionally biased region" description="Basic and acidic residues" evidence="3">
    <location>
        <begin position="931"/>
        <end position="941"/>
    </location>
</feature>
<gene>
    <name type="primary">nst1</name>
    <name type="ORF">AFUA_3G10350</name>
</gene>
<reference key="1">
    <citation type="journal article" date="2005" name="Nature">
        <title>Genomic sequence of the pathogenic and allergenic filamentous fungus Aspergillus fumigatus.</title>
        <authorList>
            <person name="Nierman W.C."/>
            <person name="Pain A."/>
            <person name="Anderson M.J."/>
            <person name="Wortman J.R."/>
            <person name="Kim H.S."/>
            <person name="Arroyo J."/>
            <person name="Berriman M."/>
            <person name="Abe K."/>
            <person name="Archer D.B."/>
            <person name="Bermejo C."/>
            <person name="Bennett J.W."/>
            <person name="Bowyer P."/>
            <person name="Chen D."/>
            <person name="Collins M."/>
            <person name="Coulsen R."/>
            <person name="Davies R."/>
            <person name="Dyer P.S."/>
            <person name="Farman M.L."/>
            <person name="Fedorova N."/>
            <person name="Fedorova N.D."/>
            <person name="Feldblyum T.V."/>
            <person name="Fischer R."/>
            <person name="Fosker N."/>
            <person name="Fraser A."/>
            <person name="Garcia J.L."/>
            <person name="Garcia M.J."/>
            <person name="Goble A."/>
            <person name="Goldman G.H."/>
            <person name="Gomi K."/>
            <person name="Griffith-Jones S."/>
            <person name="Gwilliam R."/>
            <person name="Haas B.J."/>
            <person name="Haas H."/>
            <person name="Harris D.E."/>
            <person name="Horiuchi H."/>
            <person name="Huang J."/>
            <person name="Humphray S."/>
            <person name="Jimenez J."/>
            <person name="Keller N."/>
            <person name="Khouri H."/>
            <person name="Kitamoto K."/>
            <person name="Kobayashi T."/>
            <person name="Konzack S."/>
            <person name="Kulkarni R."/>
            <person name="Kumagai T."/>
            <person name="Lafton A."/>
            <person name="Latge J.-P."/>
            <person name="Li W."/>
            <person name="Lord A."/>
            <person name="Lu C."/>
            <person name="Majoros W.H."/>
            <person name="May G.S."/>
            <person name="Miller B.L."/>
            <person name="Mohamoud Y."/>
            <person name="Molina M."/>
            <person name="Monod M."/>
            <person name="Mouyna I."/>
            <person name="Mulligan S."/>
            <person name="Murphy L.D."/>
            <person name="O'Neil S."/>
            <person name="Paulsen I."/>
            <person name="Penalva M.A."/>
            <person name="Pertea M."/>
            <person name="Price C."/>
            <person name="Pritchard B.L."/>
            <person name="Quail M.A."/>
            <person name="Rabbinowitsch E."/>
            <person name="Rawlins N."/>
            <person name="Rajandream M.A."/>
            <person name="Reichard U."/>
            <person name="Renauld H."/>
            <person name="Robson G.D."/>
            <person name="Rodriguez de Cordoba S."/>
            <person name="Rodriguez-Pena J.M."/>
            <person name="Ronning C.M."/>
            <person name="Rutter S."/>
            <person name="Salzberg S.L."/>
            <person name="Sanchez M."/>
            <person name="Sanchez-Ferrero J.C."/>
            <person name="Saunders D."/>
            <person name="Seeger K."/>
            <person name="Squares R."/>
            <person name="Squares S."/>
            <person name="Takeuchi M."/>
            <person name="Tekaia F."/>
            <person name="Turner G."/>
            <person name="Vazquez de Aldana C.R."/>
            <person name="Weidman J."/>
            <person name="White O."/>
            <person name="Woodward J.R."/>
            <person name="Yu J.-H."/>
            <person name="Fraser C.M."/>
            <person name="Galagan J.E."/>
            <person name="Asai K."/>
            <person name="Machida M."/>
            <person name="Hall N."/>
            <person name="Barrell B.G."/>
            <person name="Denning D.W."/>
        </authorList>
    </citation>
    <scope>NUCLEOTIDE SEQUENCE [LARGE SCALE GENOMIC DNA]</scope>
    <source>
        <strain>ATCC MYA-4609 / CBS 101355 / FGSC A1100 / Af293</strain>
    </source>
</reference>
<organism>
    <name type="scientific">Aspergillus fumigatus (strain ATCC MYA-4609 / CBS 101355 / FGSC A1100 / Af293)</name>
    <name type="common">Neosartorya fumigata</name>
    <dbReference type="NCBI Taxonomy" id="330879"/>
    <lineage>
        <taxon>Eukaryota</taxon>
        <taxon>Fungi</taxon>
        <taxon>Dikarya</taxon>
        <taxon>Ascomycota</taxon>
        <taxon>Pezizomycotina</taxon>
        <taxon>Eurotiomycetes</taxon>
        <taxon>Eurotiomycetidae</taxon>
        <taxon>Eurotiales</taxon>
        <taxon>Aspergillaceae</taxon>
        <taxon>Aspergillus</taxon>
        <taxon>Aspergillus subgen. Fumigati</taxon>
    </lineage>
</organism>
<proteinExistence type="inferred from homology"/>
<keyword id="KW-0175">Coiled coil</keyword>
<keyword id="KW-0963">Cytoplasm</keyword>
<keyword id="KW-1185">Reference proteome</keyword>
<keyword id="KW-0346">Stress response</keyword>
<evidence type="ECO:0000250" key="1"/>
<evidence type="ECO:0000255" key="2"/>
<evidence type="ECO:0000256" key="3">
    <source>
        <dbReference type="SAM" id="MobiDB-lite"/>
    </source>
</evidence>
<evidence type="ECO:0000305" key="4"/>
<comment type="function">
    <text evidence="1">May act as a negative regulator of salt tolerance.</text>
</comment>
<comment type="subcellular location">
    <subcellularLocation>
        <location evidence="1">Cytoplasm</location>
    </subcellularLocation>
</comment>
<comment type="similarity">
    <text evidence="4">Belongs to the NST1 family.</text>
</comment>